<organism>
    <name type="scientific">Escherichia coli O111:H-</name>
    <dbReference type="NCBI Taxonomy" id="168927"/>
    <lineage>
        <taxon>Bacteria</taxon>
        <taxon>Pseudomonadati</taxon>
        <taxon>Pseudomonadota</taxon>
        <taxon>Gammaproteobacteria</taxon>
        <taxon>Enterobacterales</taxon>
        <taxon>Enterobacteriaceae</taxon>
        <taxon>Escherichia</taxon>
    </lineage>
</organism>
<comment type="function">
    <text>Involved in the transposition of the insertion sequence IS3.</text>
</comment>
<comment type="similarity">
    <text evidence="2">Belongs to the transposase IS3/IS150/IS904 family.</text>
</comment>
<reference key="1">
    <citation type="journal article" date="1998" name="FEMS Microbiol. Lett.">
        <title>Characterization of the locus of enterocyte effacement (LEE) in different enteropathogenic Escherichia coli (EPEC) and Shiga-toxin producing Escherichia coli (STEC) serotypes.</title>
        <authorList>
            <person name="Sperandio V."/>
            <person name="Kaper J.B."/>
            <person name="Bortolini M.R."/>
            <person name="Neves B.C."/>
            <person name="Keller R."/>
            <person name="Trabulsi L.R."/>
        </authorList>
    </citation>
    <scope>NUCLEOTIDE SEQUENCE [GENOMIC DNA]</scope>
    <source>
        <strain>O111ac:H- / 172 / EPEC</strain>
    </source>
</reference>
<keyword id="KW-0233">DNA recombination</keyword>
<keyword id="KW-0238">DNA-binding</keyword>
<keyword id="KW-0814">Transposable element</keyword>
<keyword id="KW-0815">Transposition</keyword>
<dbReference type="EMBL" id="AH006325">
    <property type="protein sequence ID" value="AAC28569.1"/>
    <property type="molecule type" value="Genomic_DNA"/>
</dbReference>
<dbReference type="SMR" id="P0CF85"/>
<dbReference type="GO" id="GO:0003677">
    <property type="term" value="F:DNA binding"/>
    <property type="evidence" value="ECO:0007669"/>
    <property type="project" value="UniProtKB-KW"/>
</dbReference>
<dbReference type="GO" id="GO:0015074">
    <property type="term" value="P:DNA integration"/>
    <property type="evidence" value="ECO:0007669"/>
    <property type="project" value="InterPro"/>
</dbReference>
<dbReference type="GO" id="GO:0006310">
    <property type="term" value="P:DNA recombination"/>
    <property type="evidence" value="ECO:0007669"/>
    <property type="project" value="UniProtKB-KW"/>
</dbReference>
<dbReference type="GO" id="GO:0032196">
    <property type="term" value="P:transposition"/>
    <property type="evidence" value="ECO:0007669"/>
    <property type="project" value="UniProtKB-KW"/>
</dbReference>
<dbReference type="FunFam" id="3.30.420.10:FF:000030">
    <property type="entry name" value="IS3, transposase orfB"/>
    <property type="match status" value="1"/>
</dbReference>
<dbReference type="Gene3D" id="3.30.420.10">
    <property type="entry name" value="Ribonuclease H-like superfamily/Ribonuclease H"/>
    <property type="match status" value="1"/>
</dbReference>
<dbReference type="InterPro" id="IPR025948">
    <property type="entry name" value="HTH-like_dom"/>
</dbReference>
<dbReference type="InterPro" id="IPR001584">
    <property type="entry name" value="Integrase_cat-core"/>
</dbReference>
<dbReference type="InterPro" id="IPR012337">
    <property type="entry name" value="RNaseH-like_sf"/>
</dbReference>
<dbReference type="InterPro" id="IPR036397">
    <property type="entry name" value="RNaseH_sf"/>
</dbReference>
<dbReference type="InterPro" id="IPR048020">
    <property type="entry name" value="Transpos_IS3"/>
</dbReference>
<dbReference type="InterPro" id="IPR050900">
    <property type="entry name" value="Transposase_IS3/IS150/IS904"/>
</dbReference>
<dbReference type="NCBIfam" id="NF033516">
    <property type="entry name" value="transpos_IS3"/>
    <property type="match status" value="1"/>
</dbReference>
<dbReference type="PANTHER" id="PTHR46889:SF6">
    <property type="entry name" value="TRANSPOSASE INSF FOR INSERTION SEQUENCE IS3B"/>
    <property type="match status" value="1"/>
</dbReference>
<dbReference type="PANTHER" id="PTHR46889">
    <property type="entry name" value="TRANSPOSASE INSF FOR INSERTION SEQUENCE IS3B-RELATED"/>
    <property type="match status" value="1"/>
</dbReference>
<dbReference type="Pfam" id="PF13276">
    <property type="entry name" value="HTH_21"/>
    <property type="match status" value="1"/>
</dbReference>
<dbReference type="Pfam" id="PF00665">
    <property type="entry name" value="rve"/>
    <property type="match status" value="1"/>
</dbReference>
<dbReference type="Pfam" id="PF13333">
    <property type="entry name" value="rve_2"/>
    <property type="match status" value="1"/>
</dbReference>
<dbReference type="SUPFAM" id="SSF53098">
    <property type="entry name" value="Ribonuclease H-like"/>
    <property type="match status" value="1"/>
</dbReference>
<dbReference type="PROSITE" id="PS50994">
    <property type="entry name" value="INTEGRASE"/>
    <property type="match status" value="1"/>
</dbReference>
<name>INSF_ECO11</name>
<feature type="chain" id="PRO_0000394039" description="Transposase InsF for insertion sequence IS3">
    <location>
        <begin position="1"/>
        <end position="288"/>
    </location>
</feature>
<feature type="domain" description="Integrase catalytic" evidence="1">
    <location>
        <begin position="124"/>
        <end position="287"/>
    </location>
</feature>
<accession>P0CF85</accession>
<accession>O08009</accession>
<accession>O08012</accession>
<accession>O08304</accession>
<accession>P05822</accession>
<accession>P77673</accession>
<accession>Q2MBI8</accession>
<gene>
    <name type="primary">insF</name>
</gene>
<sequence>MKYVFIEKHQAEFSIKAMCRVLRVARSGWYTWCQRRTRISTRQQFRQHCDSVVLAAFTRSKQRYGAPRLTDELRAQGYPFNVKTVAASLRRQGLRAKASRKFSPVSYRAHGLPVSENLLEQDFYASGPNQKWAGDITYLRTDEGWLYLAVVIDLWSRAVIGWSMSPRMTAQLACDALQMALWRRKRPRNVIVHTDRGGQYCSADYQAQLKRHNLRGSMSAKGCCYDNACVESFFHSLKVECIHGEHFISREIMRATVFNYIECDYNRWRRHSWCGGLSPEQFENKNLA</sequence>
<protein>
    <recommendedName>
        <fullName>Transposase InsF for insertion sequence IS3</fullName>
    </recommendedName>
</protein>
<proteinExistence type="inferred from homology"/>
<evidence type="ECO:0000255" key="1">
    <source>
        <dbReference type="PROSITE-ProRule" id="PRU00457"/>
    </source>
</evidence>
<evidence type="ECO:0000305" key="2"/>